<evidence type="ECO:0000255" key="1">
    <source>
        <dbReference type="HAMAP-Rule" id="MF_01961"/>
    </source>
</evidence>
<evidence type="ECO:0000256" key="2">
    <source>
        <dbReference type="SAM" id="MobiDB-lite"/>
    </source>
</evidence>
<gene>
    <name evidence="1" type="primary">katG</name>
    <name type="ordered locus">Rmet_5371</name>
</gene>
<comment type="function">
    <text evidence="1">Bifunctional enzyme with both catalase and broad-spectrum peroxidase activity.</text>
</comment>
<comment type="catalytic activity">
    <reaction evidence="1">
        <text>H2O2 + AH2 = A + 2 H2O</text>
        <dbReference type="Rhea" id="RHEA:30275"/>
        <dbReference type="ChEBI" id="CHEBI:13193"/>
        <dbReference type="ChEBI" id="CHEBI:15377"/>
        <dbReference type="ChEBI" id="CHEBI:16240"/>
        <dbReference type="ChEBI" id="CHEBI:17499"/>
        <dbReference type="EC" id="1.11.1.21"/>
    </reaction>
</comment>
<comment type="catalytic activity">
    <reaction evidence="1">
        <text>2 H2O2 = O2 + 2 H2O</text>
        <dbReference type="Rhea" id="RHEA:20309"/>
        <dbReference type="ChEBI" id="CHEBI:15377"/>
        <dbReference type="ChEBI" id="CHEBI:15379"/>
        <dbReference type="ChEBI" id="CHEBI:16240"/>
        <dbReference type="EC" id="1.11.1.21"/>
    </reaction>
</comment>
<comment type="cofactor">
    <cofactor evidence="1">
        <name>heme b</name>
        <dbReference type="ChEBI" id="CHEBI:60344"/>
    </cofactor>
    <text evidence="1">Binds 1 heme b (iron(II)-protoporphyrin IX) group per dimer.</text>
</comment>
<comment type="subunit">
    <text evidence="1">Homodimer or homotetramer.</text>
</comment>
<comment type="PTM">
    <text evidence="1">Formation of the three residue Trp-Tyr-Met cross-link is important for the catalase, but not the peroxidase activity of the enzyme.</text>
</comment>
<comment type="similarity">
    <text evidence="1">Belongs to the peroxidase family. Peroxidase/catalase subfamily.</text>
</comment>
<proteinExistence type="inferred from homology"/>
<protein>
    <recommendedName>
        <fullName evidence="1">Catalase-peroxidase</fullName>
        <shortName evidence="1">CP</shortName>
        <ecNumber evidence="1">1.11.1.21</ecNumber>
    </recommendedName>
    <alternativeName>
        <fullName evidence="1">Peroxidase/catalase</fullName>
    </alternativeName>
</protein>
<name>KATG_CUPMC</name>
<geneLocation type="plasmid">
    <name>megaplasmid CH34</name>
</geneLocation>
<sequence length="726" mass="79482">MTTEAKCPFLHPAGAGRALQEWWPERLNLHILRQNAPLSDPMGEAFDYAKAFNSLDLAAVKKDLEALMTDSQSWWPADFGHYGPLFVRMAWHAAGTYRIGDGRGGAGAGQQRFAPTNSWPDNVSLDKARRLIWPIKQKYGRKISWADLIVLTGNVALESMGFKTFGFGGGREDVYEPDESVYWGNEAEWLADKRYSGNRNLENPLAAVQMGLIYVNPEGPNGNPDPVAAAIDIRETFRRMAMNDEETVALIAGGHAFGKTHGAGPASHVGPEPEAAGLEEQGLGWRSSFGTGKGGDAIGSGLEVIWTTTPTKWSNDFFKHLFEYEWELTKSPAGAHQWKPKGNAGAGTVPDPADPSKRRSPSMLTTDLSLRFDSIYGKISRRYYDHPDELADAFARAWFKLTHRDMGPRARYLGPEVPKEELLWQDPIPPVDHPLIDAKDVAALKAKVQASGLTVPQLVSTAWASASTFRGSDKRGGANGARIRLAPQKDWDVNQPAELAKVLVKLESIQSEFNKAQSGGKKVSMADLIVLAGCAGVEQAAKSAGQDVTVPFSPGRMDTTQEKTDLDAMVVLEPIADGFRNYLQGKFSVRAEALLVDKAQLLKLTVPEMTALVGGLRVLGANFGNSQHGVFTKRPGTLTNDFFVNLLDMGTEWKPVSEEREVFEGSDRATGTPRWTGTRVDLVFGSNSELRAVAEVYGAADAQEKFVQDFVAAWSKVMNLDRFDLK</sequence>
<organism>
    <name type="scientific">Cupriavidus metallidurans (strain ATCC 43123 / DSM 2839 / NBRC 102507 / CH34)</name>
    <name type="common">Ralstonia metallidurans</name>
    <dbReference type="NCBI Taxonomy" id="266264"/>
    <lineage>
        <taxon>Bacteria</taxon>
        <taxon>Pseudomonadati</taxon>
        <taxon>Pseudomonadota</taxon>
        <taxon>Betaproteobacteria</taxon>
        <taxon>Burkholderiales</taxon>
        <taxon>Burkholderiaceae</taxon>
        <taxon>Cupriavidus</taxon>
    </lineage>
</organism>
<keyword id="KW-0349">Heme</keyword>
<keyword id="KW-0376">Hydrogen peroxide</keyword>
<keyword id="KW-0408">Iron</keyword>
<keyword id="KW-0479">Metal-binding</keyword>
<keyword id="KW-0560">Oxidoreductase</keyword>
<keyword id="KW-0575">Peroxidase</keyword>
<keyword id="KW-0614">Plasmid</keyword>
<keyword id="KW-1185">Reference proteome</keyword>
<accession>Q1LC96</accession>
<feature type="chain" id="PRO_0000354878" description="Catalase-peroxidase">
    <location>
        <begin position="1"/>
        <end position="726"/>
    </location>
</feature>
<feature type="region of interest" description="Disordered" evidence="2">
    <location>
        <begin position="335"/>
        <end position="362"/>
    </location>
</feature>
<feature type="active site" description="Proton acceptor" evidence="1">
    <location>
        <position position="92"/>
    </location>
</feature>
<feature type="binding site" description="axial binding residue" evidence="1">
    <location>
        <position position="255"/>
    </location>
    <ligand>
        <name>heme b</name>
        <dbReference type="ChEBI" id="CHEBI:60344"/>
    </ligand>
    <ligandPart>
        <name>Fe</name>
        <dbReference type="ChEBI" id="CHEBI:18248"/>
    </ligandPart>
</feature>
<feature type="site" description="Transition state stabilizer" evidence="1">
    <location>
        <position position="88"/>
    </location>
</feature>
<feature type="cross-link" description="Tryptophyl-tyrosyl-methioninium (Trp-Tyr) (with M-240)" evidence="1">
    <location>
        <begin position="91"/>
        <end position="214"/>
    </location>
</feature>
<feature type="cross-link" description="Tryptophyl-tyrosyl-methioninium (Tyr-Met) (with W-91)" evidence="1">
    <location>
        <begin position="214"/>
        <end position="240"/>
    </location>
</feature>
<reference key="1">
    <citation type="journal article" date="2010" name="PLoS ONE">
        <title>The complete genome sequence of Cupriavidus metallidurans strain CH34, a master survivalist in harsh and anthropogenic environments.</title>
        <authorList>
            <person name="Janssen P.J."/>
            <person name="Van Houdt R."/>
            <person name="Moors H."/>
            <person name="Monsieurs P."/>
            <person name="Morin N."/>
            <person name="Michaux A."/>
            <person name="Benotmane M.A."/>
            <person name="Leys N."/>
            <person name="Vallaeys T."/>
            <person name="Lapidus A."/>
            <person name="Monchy S."/>
            <person name="Medigue C."/>
            <person name="Taghavi S."/>
            <person name="McCorkle S."/>
            <person name="Dunn J."/>
            <person name="van der Lelie D."/>
            <person name="Mergeay M."/>
        </authorList>
    </citation>
    <scope>NUCLEOTIDE SEQUENCE [LARGE SCALE GENOMIC DNA]</scope>
    <source>
        <strain>ATCC 43123 / DSM 2839 / NBRC 102507 / CH34</strain>
    </source>
</reference>
<dbReference type="EC" id="1.11.1.21" evidence="1"/>
<dbReference type="EMBL" id="CP000353">
    <property type="protein sequence ID" value="ABF12230.1"/>
    <property type="molecule type" value="Genomic_DNA"/>
</dbReference>
<dbReference type="RefSeq" id="WP_011519777.1">
    <property type="nucleotide sequence ID" value="NC_007974.2"/>
</dbReference>
<dbReference type="SMR" id="Q1LC96"/>
<dbReference type="PeroxiBase" id="2326">
    <property type="entry name" value="RmCP01"/>
</dbReference>
<dbReference type="KEGG" id="rme:Rmet_5371"/>
<dbReference type="eggNOG" id="COG0376">
    <property type="taxonomic scope" value="Bacteria"/>
</dbReference>
<dbReference type="HOGENOM" id="CLU_025424_2_0_4"/>
<dbReference type="Proteomes" id="UP000002429">
    <property type="component" value="Plasmid megaplasmid CH34"/>
</dbReference>
<dbReference type="GO" id="GO:0005829">
    <property type="term" value="C:cytosol"/>
    <property type="evidence" value="ECO:0007669"/>
    <property type="project" value="TreeGrafter"/>
</dbReference>
<dbReference type="GO" id="GO:0004096">
    <property type="term" value="F:catalase activity"/>
    <property type="evidence" value="ECO:0007669"/>
    <property type="project" value="UniProtKB-UniRule"/>
</dbReference>
<dbReference type="GO" id="GO:0020037">
    <property type="term" value="F:heme binding"/>
    <property type="evidence" value="ECO:0007669"/>
    <property type="project" value="InterPro"/>
</dbReference>
<dbReference type="GO" id="GO:0046872">
    <property type="term" value="F:metal ion binding"/>
    <property type="evidence" value="ECO:0007669"/>
    <property type="project" value="UniProtKB-KW"/>
</dbReference>
<dbReference type="GO" id="GO:0070301">
    <property type="term" value="P:cellular response to hydrogen peroxide"/>
    <property type="evidence" value="ECO:0007669"/>
    <property type="project" value="TreeGrafter"/>
</dbReference>
<dbReference type="GO" id="GO:0042744">
    <property type="term" value="P:hydrogen peroxide catabolic process"/>
    <property type="evidence" value="ECO:0007669"/>
    <property type="project" value="UniProtKB-KW"/>
</dbReference>
<dbReference type="CDD" id="cd00649">
    <property type="entry name" value="catalase_peroxidase_1"/>
    <property type="match status" value="1"/>
</dbReference>
<dbReference type="CDD" id="cd08200">
    <property type="entry name" value="catalase_peroxidase_2"/>
    <property type="match status" value="1"/>
</dbReference>
<dbReference type="FunFam" id="1.10.420.10:FF:000002">
    <property type="entry name" value="Catalase-peroxidase"/>
    <property type="match status" value="1"/>
</dbReference>
<dbReference type="FunFam" id="1.10.420.10:FF:000004">
    <property type="entry name" value="Catalase-peroxidase"/>
    <property type="match status" value="1"/>
</dbReference>
<dbReference type="FunFam" id="1.10.520.10:FF:000002">
    <property type="entry name" value="Catalase-peroxidase"/>
    <property type="match status" value="1"/>
</dbReference>
<dbReference type="Gene3D" id="1.10.520.10">
    <property type="match status" value="2"/>
</dbReference>
<dbReference type="Gene3D" id="1.10.420.10">
    <property type="entry name" value="Peroxidase, domain 2"/>
    <property type="match status" value="2"/>
</dbReference>
<dbReference type="HAMAP" id="MF_01961">
    <property type="entry name" value="Catal_peroxid"/>
    <property type="match status" value="1"/>
</dbReference>
<dbReference type="InterPro" id="IPR000763">
    <property type="entry name" value="Catalase_peroxidase"/>
</dbReference>
<dbReference type="InterPro" id="IPR002016">
    <property type="entry name" value="Haem_peroxidase"/>
</dbReference>
<dbReference type="InterPro" id="IPR010255">
    <property type="entry name" value="Haem_peroxidase_sf"/>
</dbReference>
<dbReference type="InterPro" id="IPR019794">
    <property type="entry name" value="Peroxidases_AS"/>
</dbReference>
<dbReference type="InterPro" id="IPR019793">
    <property type="entry name" value="Peroxidases_heam-ligand_BS"/>
</dbReference>
<dbReference type="NCBIfam" id="TIGR00198">
    <property type="entry name" value="cat_per_HPI"/>
    <property type="match status" value="1"/>
</dbReference>
<dbReference type="NCBIfam" id="NF011635">
    <property type="entry name" value="PRK15061.1"/>
    <property type="match status" value="1"/>
</dbReference>
<dbReference type="PANTHER" id="PTHR30555:SF0">
    <property type="entry name" value="CATALASE-PEROXIDASE"/>
    <property type="match status" value="1"/>
</dbReference>
<dbReference type="PANTHER" id="PTHR30555">
    <property type="entry name" value="HYDROPEROXIDASE I, BIFUNCTIONAL CATALASE-PEROXIDASE"/>
    <property type="match status" value="1"/>
</dbReference>
<dbReference type="Pfam" id="PF00141">
    <property type="entry name" value="peroxidase"/>
    <property type="match status" value="2"/>
</dbReference>
<dbReference type="PRINTS" id="PR00460">
    <property type="entry name" value="BPEROXIDASE"/>
</dbReference>
<dbReference type="PRINTS" id="PR00458">
    <property type="entry name" value="PEROXIDASE"/>
</dbReference>
<dbReference type="SUPFAM" id="SSF48113">
    <property type="entry name" value="Heme-dependent peroxidases"/>
    <property type="match status" value="2"/>
</dbReference>
<dbReference type="PROSITE" id="PS00435">
    <property type="entry name" value="PEROXIDASE_1"/>
    <property type="match status" value="1"/>
</dbReference>
<dbReference type="PROSITE" id="PS00436">
    <property type="entry name" value="PEROXIDASE_2"/>
    <property type="match status" value="1"/>
</dbReference>
<dbReference type="PROSITE" id="PS50873">
    <property type="entry name" value="PEROXIDASE_4"/>
    <property type="match status" value="1"/>
</dbReference>